<proteinExistence type="inferred from homology"/>
<organism>
    <name type="scientific">Escherichia coli (strain SMS-3-5 / SECEC)</name>
    <dbReference type="NCBI Taxonomy" id="439855"/>
    <lineage>
        <taxon>Bacteria</taxon>
        <taxon>Pseudomonadati</taxon>
        <taxon>Pseudomonadota</taxon>
        <taxon>Gammaproteobacteria</taxon>
        <taxon>Enterobacterales</taxon>
        <taxon>Enterobacteriaceae</taxon>
        <taxon>Escherichia</taxon>
    </lineage>
</organism>
<name>MENC_ECOSM</name>
<dbReference type="EC" id="4.2.1.113" evidence="1"/>
<dbReference type="EMBL" id="CP000970">
    <property type="protein sequence ID" value="ACB18448.1"/>
    <property type="molecule type" value="Genomic_DNA"/>
</dbReference>
<dbReference type="RefSeq" id="WP_001255644.1">
    <property type="nucleotide sequence ID" value="NC_010498.1"/>
</dbReference>
<dbReference type="SMR" id="B1LLL6"/>
<dbReference type="KEGG" id="ecm:EcSMS35_2416"/>
<dbReference type="HOGENOM" id="CLU_030273_0_1_6"/>
<dbReference type="UniPathway" id="UPA00079"/>
<dbReference type="UniPathway" id="UPA01057">
    <property type="reaction ID" value="UER00165"/>
</dbReference>
<dbReference type="Proteomes" id="UP000007011">
    <property type="component" value="Chromosome"/>
</dbReference>
<dbReference type="GO" id="GO:0000287">
    <property type="term" value="F:magnesium ion binding"/>
    <property type="evidence" value="ECO:0007669"/>
    <property type="project" value="UniProtKB-UniRule"/>
</dbReference>
<dbReference type="GO" id="GO:0043748">
    <property type="term" value="F:O-succinylbenzoate synthase activity"/>
    <property type="evidence" value="ECO:0007669"/>
    <property type="project" value="UniProtKB-EC"/>
</dbReference>
<dbReference type="GO" id="GO:0009234">
    <property type="term" value="P:menaquinone biosynthetic process"/>
    <property type="evidence" value="ECO:0007669"/>
    <property type="project" value="UniProtKB-UniRule"/>
</dbReference>
<dbReference type="CDD" id="cd03320">
    <property type="entry name" value="OSBS"/>
    <property type="match status" value="1"/>
</dbReference>
<dbReference type="FunFam" id="3.20.20.120:FF:000006">
    <property type="entry name" value="o-succinylbenzoate synthase"/>
    <property type="match status" value="1"/>
</dbReference>
<dbReference type="FunFam" id="3.30.390.10:FF:000005">
    <property type="entry name" value="o-succinylbenzoate synthase"/>
    <property type="match status" value="1"/>
</dbReference>
<dbReference type="Gene3D" id="3.20.20.120">
    <property type="entry name" value="Enolase-like C-terminal domain"/>
    <property type="match status" value="1"/>
</dbReference>
<dbReference type="Gene3D" id="3.30.390.10">
    <property type="entry name" value="Enolase-like, N-terminal domain"/>
    <property type="match status" value="1"/>
</dbReference>
<dbReference type="HAMAP" id="MF_00470">
    <property type="entry name" value="MenC_1"/>
    <property type="match status" value="1"/>
</dbReference>
<dbReference type="InterPro" id="IPR036849">
    <property type="entry name" value="Enolase-like_C_sf"/>
</dbReference>
<dbReference type="InterPro" id="IPR029017">
    <property type="entry name" value="Enolase-like_N"/>
</dbReference>
<dbReference type="InterPro" id="IPR029065">
    <property type="entry name" value="Enolase_C-like"/>
</dbReference>
<dbReference type="InterPro" id="IPR013342">
    <property type="entry name" value="Mandelate_racemase_C"/>
</dbReference>
<dbReference type="InterPro" id="IPR010196">
    <property type="entry name" value="OSB_synthase_MenC1"/>
</dbReference>
<dbReference type="InterPro" id="IPR041338">
    <property type="entry name" value="OSBS_N"/>
</dbReference>
<dbReference type="NCBIfam" id="TIGR01927">
    <property type="entry name" value="menC_gam_Gplu"/>
    <property type="match status" value="1"/>
</dbReference>
<dbReference type="NCBIfam" id="NF003473">
    <property type="entry name" value="PRK05105.1"/>
    <property type="match status" value="1"/>
</dbReference>
<dbReference type="PANTHER" id="PTHR48073:SF2">
    <property type="entry name" value="O-SUCCINYLBENZOATE SYNTHASE"/>
    <property type="match status" value="1"/>
</dbReference>
<dbReference type="PANTHER" id="PTHR48073">
    <property type="entry name" value="O-SUCCINYLBENZOATE SYNTHASE-RELATED"/>
    <property type="match status" value="1"/>
</dbReference>
<dbReference type="Pfam" id="PF21508">
    <property type="entry name" value="MenC_N"/>
    <property type="match status" value="1"/>
</dbReference>
<dbReference type="Pfam" id="PF13378">
    <property type="entry name" value="MR_MLE_C"/>
    <property type="match status" value="1"/>
</dbReference>
<dbReference type="SFLD" id="SFLDG00180">
    <property type="entry name" value="muconate_cycloisomerase"/>
    <property type="match status" value="1"/>
</dbReference>
<dbReference type="SFLD" id="SFLDF00009">
    <property type="entry name" value="o-succinylbenzoate_synthase"/>
    <property type="match status" value="1"/>
</dbReference>
<dbReference type="SMART" id="SM00922">
    <property type="entry name" value="MR_MLE"/>
    <property type="match status" value="1"/>
</dbReference>
<dbReference type="SUPFAM" id="SSF51604">
    <property type="entry name" value="Enolase C-terminal domain-like"/>
    <property type="match status" value="1"/>
</dbReference>
<dbReference type="SUPFAM" id="SSF54826">
    <property type="entry name" value="Enolase N-terminal domain-like"/>
    <property type="match status" value="1"/>
</dbReference>
<gene>
    <name evidence="1" type="primary">menC</name>
    <name type="ordered locus">EcSMS35_2416</name>
</gene>
<accession>B1LLL6</accession>
<comment type="function">
    <text evidence="1">Converts 2-succinyl-6-hydroxy-2,4-cyclohexadiene-1-carboxylate (SHCHC) to 2-succinylbenzoate (OSB).</text>
</comment>
<comment type="catalytic activity">
    <reaction evidence="1">
        <text>(1R,6R)-6-hydroxy-2-succinyl-cyclohexa-2,4-diene-1-carboxylate = 2-succinylbenzoate + H2O</text>
        <dbReference type="Rhea" id="RHEA:10196"/>
        <dbReference type="ChEBI" id="CHEBI:15377"/>
        <dbReference type="ChEBI" id="CHEBI:18325"/>
        <dbReference type="ChEBI" id="CHEBI:58689"/>
        <dbReference type="EC" id="4.2.1.113"/>
    </reaction>
</comment>
<comment type="cofactor">
    <cofactor evidence="1">
        <name>a divalent metal cation</name>
        <dbReference type="ChEBI" id="CHEBI:60240"/>
    </cofactor>
</comment>
<comment type="pathway">
    <text evidence="1">Quinol/quinone metabolism; 1,4-dihydroxy-2-naphthoate biosynthesis; 1,4-dihydroxy-2-naphthoate from chorismate: step 4/7.</text>
</comment>
<comment type="pathway">
    <text evidence="1">Quinol/quinone metabolism; menaquinone biosynthesis.</text>
</comment>
<comment type="similarity">
    <text evidence="1">Belongs to the mandelate racemase/muconate lactonizing enzyme family. MenC type 1 subfamily.</text>
</comment>
<sequence>MRSAQVYRWQIPMDAGVVLRDRRLKTREGLYVCLREGEREGWGEISPLPGFSQETWEEAQSVLLAWVNNWLAGDCELPQMPSVAFGVSCALAELADTLPQAANYRAAPLCNGDPDDLILKLADMPGEKVAKVKVGLYEAVRDGMVVNLLLEAIPDLHLRLDANRAWTPLKGQQFAKYVNPDYRHRIAFLEEPCKTRDDSRAFARETGIAIAWDESLREPDFAFVAEKGVRAVVIKPTLTGSLDKVREQVQAAHALGLTAVISSSIESSLGLTQLARIAAWLTPDTIPGLDTLDLMQAQQVRRWPGSPLPLVEVDALERLL</sequence>
<protein>
    <recommendedName>
        <fullName evidence="1">o-succinylbenzoate synthase</fullName>
        <shortName evidence="1">OSB synthase</shortName>
        <shortName evidence="1">OSBS</shortName>
        <ecNumber evidence="1">4.2.1.113</ecNumber>
    </recommendedName>
    <alternativeName>
        <fullName evidence="1">4-(2'-carboxyphenyl)-4-oxybutyric acid synthase</fullName>
    </alternativeName>
    <alternativeName>
        <fullName evidence="1">o-succinylbenzoic acid synthase</fullName>
    </alternativeName>
</protein>
<reference key="1">
    <citation type="journal article" date="2008" name="J. Bacteriol.">
        <title>Insights into the environmental resistance gene pool from the genome sequence of the multidrug-resistant environmental isolate Escherichia coli SMS-3-5.</title>
        <authorList>
            <person name="Fricke W.F."/>
            <person name="Wright M.S."/>
            <person name="Lindell A.H."/>
            <person name="Harkins D.M."/>
            <person name="Baker-Austin C."/>
            <person name="Ravel J."/>
            <person name="Stepanauskas R."/>
        </authorList>
    </citation>
    <scope>NUCLEOTIDE SEQUENCE [LARGE SCALE GENOMIC DNA]</scope>
    <source>
        <strain>SMS-3-5 / SECEC</strain>
    </source>
</reference>
<evidence type="ECO:0000255" key="1">
    <source>
        <dbReference type="HAMAP-Rule" id="MF_00470"/>
    </source>
</evidence>
<keyword id="KW-0456">Lyase</keyword>
<keyword id="KW-0460">Magnesium</keyword>
<keyword id="KW-0474">Menaquinone biosynthesis</keyword>
<keyword id="KW-0479">Metal-binding</keyword>
<feature type="chain" id="PRO_1000125573" description="o-succinylbenzoate synthase">
    <location>
        <begin position="1"/>
        <end position="320"/>
    </location>
</feature>
<feature type="active site" description="Proton donor" evidence="1">
    <location>
        <position position="133"/>
    </location>
</feature>
<feature type="active site" description="Proton acceptor" evidence="1">
    <location>
        <position position="235"/>
    </location>
</feature>
<feature type="binding site" evidence="1">
    <location>
        <position position="161"/>
    </location>
    <ligand>
        <name>Mg(2+)</name>
        <dbReference type="ChEBI" id="CHEBI:18420"/>
    </ligand>
</feature>
<feature type="binding site" evidence="1">
    <location>
        <position position="190"/>
    </location>
    <ligand>
        <name>Mg(2+)</name>
        <dbReference type="ChEBI" id="CHEBI:18420"/>
    </ligand>
</feature>
<feature type="binding site" evidence="1">
    <location>
        <position position="213"/>
    </location>
    <ligand>
        <name>Mg(2+)</name>
        <dbReference type="ChEBI" id="CHEBI:18420"/>
    </ligand>
</feature>